<sequence length="304" mass="33274">MSWIERILNKSNITQTRKASIPEGVWTKCDSCGQVLYRAELERNLEVCPKCDHHMRMSARARLHMLLDAGSEVELGSELEPKDILKFRDSKKYKDRISAAQKDTGEKDALVAMKGTLQGMPIVAASFEFAFMGGSMASVVGARFVRAVEQALEDNCPLVCFSSSGGARMQEALMSLMQMAKTSAALAKMQERGLPYISVLTDPTMGGVSASLAMLGDINIAEPKALIGFAGPRVIEQTVREKLPPGFQRSEFLIEKGAIDMIVRRPVMRQTLASILSKLTHQPQPSVVESKADTVAQPENQADV</sequence>
<keyword id="KW-0067">ATP-binding</keyword>
<keyword id="KW-0963">Cytoplasm</keyword>
<keyword id="KW-0275">Fatty acid biosynthesis</keyword>
<keyword id="KW-0276">Fatty acid metabolism</keyword>
<keyword id="KW-0444">Lipid biosynthesis</keyword>
<keyword id="KW-0443">Lipid metabolism</keyword>
<keyword id="KW-0479">Metal-binding</keyword>
<keyword id="KW-0547">Nucleotide-binding</keyword>
<keyword id="KW-0808">Transferase</keyword>
<keyword id="KW-0862">Zinc</keyword>
<keyword id="KW-0863">Zinc-finger</keyword>
<name>ACCD_YERPA</name>
<proteinExistence type="inferred from homology"/>
<comment type="function">
    <text evidence="1">Component of the acetyl coenzyme A carboxylase (ACC) complex. Biotin carboxylase (BC) catalyzes the carboxylation of biotin on its carrier protein (BCCP) and then the CO(2) group is transferred by the transcarboxylase to acetyl-CoA to form malonyl-CoA.</text>
</comment>
<comment type="catalytic activity">
    <reaction evidence="1">
        <text>N(6)-carboxybiotinyl-L-lysyl-[protein] + acetyl-CoA = N(6)-biotinyl-L-lysyl-[protein] + malonyl-CoA</text>
        <dbReference type="Rhea" id="RHEA:54728"/>
        <dbReference type="Rhea" id="RHEA-COMP:10505"/>
        <dbReference type="Rhea" id="RHEA-COMP:10506"/>
        <dbReference type="ChEBI" id="CHEBI:57288"/>
        <dbReference type="ChEBI" id="CHEBI:57384"/>
        <dbReference type="ChEBI" id="CHEBI:83144"/>
        <dbReference type="ChEBI" id="CHEBI:83145"/>
        <dbReference type="EC" id="2.1.3.15"/>
    </reaction>
</comment>
<comment type="cofactor">
    <cofactor evidence="1">
        <name>Zn(2+)</name>
        <dbReference type="ChEBI" id="CHEBI:29105"/>
    </cofactor>
    <text evidence="1">Binds 1 zinc ion per subunit.</text>
</comment>
<comment type="pathway">
    <text evidence="1">Lipid metabolism; malonyl-CoA biosynthesis; malonyl-CoA from acetyl-CoA: step 1/1.</text>
</comment>
<comment type="subunit">
    <text evidence="1">Acetyl-CoA carboxylase is a heterohexamer composed of biotin carboxyl carrier protein (AccB), biotin carboxylase (AccC) and two subunits each of ACCase subunit alpha (AccA) and ACCase subunit beta (AccD).</text>
</comment>
<comment type="subcellular location">
    <subcellularLocation>
        <location evidence="1">Cytoplasm</location>
    </subcellularLocation>
</comment>
<comment type="similarity">
    <text evidence="1">Belongs to the AccD/PCCB family.</text>
</comment>
<reference key="1">
    <citation type="journal article" date="2006" name="J. Bacteriol.">
        <title>Complete genome sequence of Yersinia pestis strains Antiqua and Nepal516: evidence of gene reduction in an emerging pathogen.</title>
        <authorList>
            <person name="Chain P.S.G."/>
            <person name="Hu P."/>
            <person name="Malfatti S.A."/>
            <person name="Radnedge L."/>
            <person name="Larimer F."/>
            <person name="Vergez L.M."/>
            <person name="Worsham P."/>
            <person name="Chu M.C."/>
            <person name="Andersen G.L."/>
        </authorList>
    </citation>
    <scope>NUCLEOTIDE SEQUENCE [LARGE SCALE GENOMIC DNA]</scope>
    <source>
        <strain>Antiqua</strain>
    </source>
</reference>
<accession>Q1C680</accession>
<protein>
    <recommendedName>
        <fullName evidence="1">Acetyl-coenzyme A carboxylase carboxyl transferase subunit beta</fullName>
        <shortName evidence="1">ACCase subunit beta</shortName>
        <shortName evidence="1">Acetyl-CoA carboxylase carboxyltransferase subunit beta</shortName>
        <ecNumber evidence="1">2.1.3.15</ecNumber>
    </recommendedName>
</protein>
<gene>
    <name evidence="1" type="primary">accD</name>
    <name type="ordered locus">YPA_2076</name>
</gene>
<evidence type="ECO:0000255" key="1">
    <source>
        <dbReference type="HAMAP-Rule" id="MF_01395"/>
    </source>
</evidence>
<evidence type="ECO:0000255" key="2">
    <source>
        <dbReference type="PROSITE-ProRule" id="PRU01136"/>
    </source>
</evidence>
<organism>
    <name type="scientific">Yersinia pestis bv. Antiqua (strain Antiqua)</name>
    <dbReference type="NCBI Taxonomy" id="360102"/>
    <lineage>
        <taxon>Bacteria</taxon>
        <taxon>Pseudomonadati</taxon>
        <taxon>Pseudomonadota</taxon>
        <taxon>Gammaproteobacteria</taxon>
        <taxon>Enterobacterales</taxon>
        <taxon>Yersiniaceae</taxon>
        <taxon>Yersinia</taxon>
    </lineage>
</organism>
<dbReference type="EC" id="2.1.3.15" evidence="1"/>
<dbReference type="EMBL" id="CP000308">
    <property type="protein sequence ID" value="ABG14042.1"/>
    <property type="molecule type" value="Genomic_DNA"/>
</dbReference>
<dbReference type="PIR" id="AH0337">
    <property type="entry name" value="AH0337"/>
</dbReference>
<dbReference type="RefSeq" id="WP_002209729.1">
    <property type="nucleotide sequence ID" value="NZ_CP009906.1"/>
</dbReference>
<dbReference type="SMR" id="Q1C680"/>
<dbReference type="GeneID" id="57975921"/>
<dbReference type="KEGG" id="ypa:YPA_2076"/>
<dbReference type="UniPathway" id="UPA00655">
    <property type="reaction ID" value="UER00711"/>
</dbReference>
<dbReference type="Proteomes" id="UP000001971">
    <property type="component" value="Chromosome"/>
</dbReference>
<dbReference type="GO" id="GO:0009329">
    <property type="term" value="C:acetate CoA-transferase complex"/>
    <property type="evidence" value="ECO:0007669"/>
    <property type="project" value="TreeGrafter"/>
</dbReference>
<dbReference type="GO" id="GO:0003989">
    <property type="term" value="F:acetyl-CoA carboxylase activity"/>
    <property type="evidence" value="ECO:0007669"/>
    <property type="project" value="InterPro"/>
</dbReference>
<dbReference type="GO" id="GO:0005524">
    <property type="term" value="F:ATP binding"/>
    <property type="evidence" value="ECO:0007669"/>
    <property type="project" value="UniProtKB-KW"/>
</dbReference>
<dbReference type="GO" id="GO:0016743">
    <property type="term" value="F:carboxyl- or carbamoyltransferase activity"/>
    <property type="evidence" value="ECO:0007669"/>
    <property type="project" value="UniProtKB-UniRule"/>
</dbReference>
<dbReference type="GO" id="GO:0008270">
    <property type="term" value="F:zinc ion binding"/>
    <property type="evidence" value="ECO:0007669"/>
    <property type="project" value="UniProtKB-UniRule"/>
</dbReference>
<dbReference type="GO" id="GO:0006633">
    <property type="term" value="P:fatty acid biosynthetic process"/>
    <property type="evidence" value="ECO:0007669"/>
    <property type="project" value="UniProtKB-KW"/>
</dbReference>
<dbReference type="GO" id="GO:2001295">
    <property type="term" value="P:malonyl-CoA biosynthetic process"/>
    <property type="evidence" value="ECO:0007669"/>
    <property type="project" value="UniProtKB-UniRule"/>
</dbReference>
<dbReference type="FunFam" id="3.90.226.10:FF:000013">
    <property type="entry name" value="Acetyl-coenzyme A carboxylase carboxyl transferase subunit beta"/>
    <property type="match status" value="1"/>
</dbReference>
<dbReference type="Gene3D" id="3.90.226.10">
    <property type="entry name" value="2-enoyl-CoA Hydratase, Chain A, domain 1"/>
    <property type="match status" value="1"/>
</dbReference>
<dbReference type="HAMAP" id="MF_01395">
    <property type="entry name" value="AcetylCoA_CT_beta"/>
    <property type="match status" value="1"/>
</dbReference>
<dbReference type="InterPro" id="IPR034733">
    <property type="entry name" value="AcCoA_carboxyl_beta"/>
</dbReference>
<dbReference type="InterPro" id="IPR000438">
    <property type="entry name" value="Acetyl_CoA_COase_Trfase_b_su"/>
</dbReference>
<dbReference type="InterPro" id="IPR029045">
    <property type="entry name" value="ClpP/crotonase-like_dom_sf"/>
</dbReference>
<dbReference type="InterPro" id="IPR011762">
    <property type="entry name" value="COA_CT_N"/>
</dbReference>
<dbReference type="InterPro" id="IPR041010">
    <property type="entry name" value="Znf-ACC"/>
</dbReference>
<dbReference type="NCBIfam" id="TIGR00515">
    <property type="entry name" value="accD"/>
    <property type="match status" value="1"/>
</dbReference>
<dbReference type="PANTHER" id="PTHR42995">
    <property type="entry name" value="ACETYL-COENZYME A CARBOXYLASE CARBOXYL TRANSFERASE SUBUNIT BETA, CHLOROPLASTIC"/>
    <property type="match status" value="1"/>
</dbReference>
<dbReference type="PANTHER" id="PTHR42995:SF5">
    <property type="entry name" value="ACETYL-COENZYME A CARBOXYLASE CARBOXYL TRANSFERASE SUBUNIT BETA, CHLOROPLASTIC"/>
    <property type="match status" value="1"/>
</dbReference>
<dbReference type="Pfam" id="PF01039">
    <property type="entry name" value="Carboxyl_trans"/>
    <property type="match status" value="1"/>
</dbReference>
<dbReference type="Pfam" id="PF17848">
    <property type="entry name" value="Zn_ribbon_ACC"/>
    <property type="match status" value="1"/>
</dbReference>
<dbReference type="PRINTS" id="PR01070">
    <property type="entry name" value="ACCCTRFRASEB"/>
</dbReference>
<dbReference type="SUPFAM" id="SSF52096">
    <property type="entry name" value="ClpP/crotonase"/>
    <property type="match status" value="1"/>
</dbReference>
<dbReference type="PROSITE" id="PS50980">
    <property type="entry name" value="COA_CT_NTER"/>
    <property type="match status" value="1"/>
</dbReference>
<feature type="chain" id="PRO_0000359107" description="Acetyl-coenzyme A carboxylase carboxyl transferase subunit beta">
    <location>
        <begin position="1"/>
        <end position="304"/>
    </location>
</feature>
<feature type="domain" description="CoA carboxyltransferase N-terminal" evidence="2">
    <location>
        <begin position="25"/>
        <end position="294"/>
    </location>
</feature>
<feature type="zinc finger region" description="C4-type" evidence="1">
    <location>
        <begin position="29"/>
        <end position="51"/>
    </location>
</feature>
<feature type="binding site" evidence="1">
    <location>
        <position position="29"/>
    </location>
    <ligand>
        <name>Zn(2+)</name>
        <dbReference type="ChEBI" id="CHEBI:29105"/>
    </ligand>
</feature>
<feature type="binding site" evidence="1">
    <location>
        <position position="32"/>
    </location>
    <ligand>
        <name>Zn(2+)</name>
        <dbReference type="ChEBI" id="CHEBI:29105"/>
    </ligand>
</feature>
<feature type="binding site" evidence="1">
    <location>
        <position position="48"/>
    </location>
    <ligand>
        <name>Zn(2+)</name>
        <dbReference type="ChEBI" id="CHEBI:29105"/>
    </ligand>
</feature>
<feature type="binding site" evidence="1">
    <location>
        <position position="51"/>
    </location>
    <ligand>
        <name>Zn(2+)</name>
        <dbReference type="ChEBI" id="CHEBI:29105"/>
    </ligand>
</feature>